<dbReference type="EC" id="2.4.1.227" evidence="1"/>
<dbReference type="EMBL" id="CP000730">
    <property type="protein sequence ID" value="ABX29365.1"/>
    <property type="molecule type" value="Genomic_DNA"/>
</dbReference>
<dbReference type="RefSeq" id="WP_000160913.1">
    <property type="nucleotide sequence ID" value="NC_010079.1"/>
</dbReference>
<dbReference type="SMR" id="A8Z3Z7"/>
<dbReference type="CAZy" id="GT28">
    <property type="family name" value="Glycosyltransferase Family 28"/>
</dbReference>
<dbReference type="KEGG" id="sax:USA300HOU_1355"/>
<dbReference type="HOGENOM" id="CLU_037404_0_0_9"/>
<dbReference type="UniPathway" id="UPA00219"/>
<dbReference type="GO" id="GO:0005886">
    <property type="term" value="C:plasma membrane"/>
    <property type="evidence" value="ECO:0007669"/>
    <property type="project" value="UniProtKB-SubCell"/>
</dbReference>
<dbReference type="GO" id="GO:0050511">
    <property type="term" value="F:undecaprenyldiphospho-muramoylpentapeptide beta-N-acetylglucosaminyltransferase activity"/>
    <property type="evidence" value="ECO:0007669"/>
    <property type="project" value="UniProtKB-UniRule"/>
</dbReference>
<dbReference type="GO" id="GO:0005975">
    <property type="term" value="P:carbohydrate metabolic process"/>
    <property type="evidence" value="ECO:0007669"/>
    <property type="project" value="InterPro"/>
</dbReference>
<dbReference type="GO" id="GO:0051301">
    <property type="term" value="P:cell division"/>
    <property type="evidence" value="ECO:0007669"/>
    <property type="project" value="UniProtKB-KW"/>
</dbReference>
<dbReference type="GO" id="GO:0071555">
    <property type="term" value="P:cell wall organization"/>
    <property type="evidence" value="ECO:0007669"/>
    <property type="project" value="UniProtKB-KW"/>
</dbReference>
<dbReference type="GO" id="GO:0030259">
    <property type="term" value="P:lipid glycosylation"/>
    <property type="evidence" value="ECO:0007669"/>
    <property type="project" value="UniProtKB-UniRule"/>
</dbReference>
<dbReference type="GO" id="GO:0009252">
    <property type="term" value="P:peptidoglycan biosynthetic process"/>
    <property type="evidence" value="ECO:0007669"/>
    <property type="project" value="UniProtKB-UniRule"/>
</dbReference>
<dbReference type="GO" id="GO:0008360">
    <property type="term" value="P:regulation of cell shape"/>
    <property type="evidence" value="ECO:0007669"/>
    <property type="project" value="UniProtKB-KW"/>
</dbReference>
<dbReference type="CDD" id="cd03785">
    <property type="entry name" value="GT28_MurG"/>
    <property type="match status" value="1"/>
</dbReference>
<dbReference type="Gene3D" id="3.40.50.2000">
    <property type="entry name" value="Glycogen Phosphorylase B"/>
    <property type="match status" value="2"/>
</dbReference>
<dbReference type="HAMAP" id="MF_00033">
    <property type="entry name" value="MurG"/>
    <property type="match status" value="1"/>
</dbReference>
<dbReference type="InterPro" id="IPR006009">
    <property type="entry name" value="GlcNAc_MurG"/>
</dbReference>
<dbReference type="InterPro" id="IPR007235">
    <property type="entry name" value="Glyco_trans_28_C"/>
</dbReference>
<dbReference type="InterPro" id="IPR004276">
    <property type="entry name" value="GlycoTrans_28_N"/>
</dbReference>
<dbReference type="NCBIfam" id="NF009102">
    <property type="entry name" value="PRK12446.1"/>
    <property type="match status" value="1"/>
</dbReference>
<dbReference type="PANTHER" id="PTHR21015:SF27">
    <property type="entry name" value="UDP-N-ACETYLGLUCOSAMINE--N-ACETYLMURAMYL-(PENTAPEPTIDE) PYROPHOSPHORYL-UNDECAPRENOL N-ACETYLGLUCOSAMINE TRANSFERASE"/>
    <property type="match status" value="1"/>
</dbReference>
<dbReference type="PANTHER" id="PTHR21015">
    <property type="entry name" value="UDP-N-ACETYLGLUCOSAMINE--N-ACETYLMURAMYL-(PENTAPEPTIDE) PYROPHOSPHORYL-UNDECAPRENOL N-ACETYLGLUCOSAMINE TRANSFERASE 1"/>
    <property type="match status" value="1"/>
</dbReference>
<dbReference type="Pfam" id="PF04101">
    <property type="entry name" value="Glyco_tran_28_C"/>
    <property type="match status" value="1"/>
</dbReference>
<dbReference type="Pfam" id="PF03033">
    <property type="entry name" value="Glyco_transf_28"/>
    <property type="match status" value="1"/>
</dbReference>
<dbReference type="SUPFAM" id="SSF53756">
    <property type="entry name" value="UDP-Glycosyltransferase/glycogen phosphorylase"/>
    <property type="match status" value="1"/>
</dbReference>
<protein>
    <recommendedName>
        <fullName evidence="1">UDP-N-acetylglucosamine--N-acetylmuramyl-(pentapeptide) pyrophosphoryl-undecaprenol N-acetylglucosamine transferase</fullName>
        <ecNumber evidence="1">2.4.1.227</ecNumber>
    </recommendedName>
    <alternativeName>
        <fullName evidence="1">Undecaprenyl-PP-MurNAc-pentapeptide-UDPGlcNAc GlcNAc transferase</fullName>
    </alternativeName>
</protein>
<feature type="chain" id="PRO_1000074475" description="UDP-N-acetylglucosamine--N-acetylmuramyl-(pentapeptide) pyrophosphoryl-undecaprenol N-acetylglucosamine transferase">
    <location>
        <begin position="1"/>
        <end position="356"/>
    </location>
</feature>
<feature type="binding site" evidence="1">
    <location>
        <position position="166"/>
    </location>
    <ligand>
        <name>UDP-N-acetyl-alpha-D-glucosamine</name>
        <dbReference type="ChEBI" id="CHEBI:57705"/>
    </ligand>
</feature>
<feature type="binding site" evidence="1">
    <location>
        <position position="196"/>
    </location>
    <ligand>
        <name>UDP-N-acetyl-alpha-D-glucosamine</name>
        <dbReference type="ChEBI" id="CHEBI:57705"/>
    </ligand>
</feature>
<feature type="binding site" evidence="1">
    <location>
        <position position="290"/>
    </location>
    <ligand>
        <name>UDP-N-acetyl-alpha-D-glucosamine</name>
        <dbReference type="ChEBI" id="CHEBI:57705"/>
    </ligand>
</feature>
<sequence>MTKIAFTGGGTVGHVSVNLSLIPTALSQGYEALYIGSKNGIEREMIESQLPEIKYYPISSGKLRRYISLENAKDVFKVLKGILDARKVLKKEKPDLLFSKGGFVSVPVVIAAKSLNIPTLIHESDLTPGLANKIALKFAKKIYTTFEETLNYLPKEKADFIGATIREDLKNGNAHNGYQLTGFNENKKVLLVMGGSLGSKKLNSIIRENLDALLQQYQVIHLTGKGLKDAQVKKSGYIQYEFVKEDLTDLLAITDTVISRAGSNAIYEFLTLRIPMLLVPLGLDQSRGDQIDNANHFADKGYAKAIDEEQLTAQILLQELNEMEQERTRIINNMKSYEQSYTKEALFDKMIKDALN</sequence>
<keyword id="KW-0131">Cell cycle</keyword>
<keyword id="KW-0132">Cell division</keyword>
<keyword id="KW-1003">Cell membrane</keyword>
<keyword id="KW-0133">Cell shape</keyword>
<keyword id="KW-0961">Cell wall biogenesis/degradation</keyword>
<keyword id="KW-0328">Glycosyltransferase</keyword>
<keyword id="KW-0472">Membrane</keyword>
<keyword id="KW-0573">Peptidoglycan synthesis</keyword>
<keyword id="KW-0808">Transferase</keyword>
<accession>A8Z3Z7</accession>
<proteinExistence type="inferred from homology"/>
<comment type="function">
    <text evidence="1">Cell wall formation. Catalyzes the transfer of a GlcNAc subunit on undecaprenyl-pyrophosphoryl-MurNAc-pentapeptide (lipid intermediate I) to form undecaprenyl-pyrophosphoryl-MurNAc-(pentapeptide)GlcNAc (lipid intermediate II).</text>
</comment>
<comment type="catalytic activity">
    <reaction evidence="1">
        <text>Mur2Ac(oyl-L-Ala-gamma-D-Glu-L-Lys-D-Ala-D-Ala)-di-trans,octa-cis-undecaprenyl diphosphate + UDP-N-acetyl-alpha-D-glucosamine = beta-D-GlcNAc-(1-&gt;4)-Mur2Ac(oyl-L-Ala-gamma-D-Glu-L-Lys-D-Ala-D-Ala)-di-trans,octa-cis-undecaprenyl diphosphate + UDP + H(+)</text>
        <dbReference type="Rhea" id="RHEA:23192"/>
        <dbReference type="ChEBI" id="CHEBI:15378"/>
        <dbReference type="ChEBI" id="CHEBI:57705"/>
        <dbReference type="ChEBI" id="CHEBI:58223"/>
        <dbReference type="ChEBI" id="CHEBI:60032"/>
        <dbReference type="ChEBI" id="CHEBI:60033"/>
        <dbReference type="EC" id="2.4.1.227"/>
    </reaction>
</comment>
<comment type="pathway">
    <text evidence="1">Cell wall biogenesis; peptidoglycan biosynthesis.</text>
</comment>
<comment type="subcellular location">
    <subcellularLocation>
        <location evidence="1">Cell membrane</location>
        <topology evidence="1">Peripheral membrane protein</topology>
        <orientation evidence="1">Cytoplasmic side</orientation>
    </subcellularLocation>
</comment>
<comment type="similarity">
    <text evidence="1">Belongs to the glycosyltransferase 28 family. MurG subfamily.</text>
</comment>
<evidence type="ECO:0000255" key="1">
    <source>
        <dbReference type="HAMAP-Rule" id="MF_00033"/>
    </source>
</evidence>
<reference key="1">
    <citation type="journal article" date="2007" name="BMC Microbiol.">
        <title>Subtle genetic changes enhance virulence of methicillin resistant and sensitive Staphylococcus aureus.</title>
        <authorList>
            <person name="Highlander S.K."/>
            <person name="Hulten K.G."/>
            <person name="Qin X."/>
            <person name="Jiang H."/>
            <person name="Yerrapragada S."/>
            <person name="Mason E.O. Jr."/>
            <person name="Shang Y."/>
            <person name="Williams T.M."/>
            <person name="Fortunov R.M."/>
            <person name="Liu Y."/>
            <person name="Igboeli O."/>
            <person name="Petrosino J."/>
            <person name="Tirumalai M."/>
            <person name="Uzman A."/>
            <person name="Fox G.E."/>
            <person name="Cardenas A.M."/>
            <person name="Muzny D.M."/>
            <person name="Hemphill L."/>
            <person name="Ding Y."/>
            <person name="Dugan S."/>
            <person name="Blyth P.R."/>
            <person name="Buhay C.J."/>
            <person name="Dinh H.H."/>
            <person name="Hawes A.C."/>
            <person name="Holder M."/>
            <person name="Kovar C.L."/>
            <person name="Lee S.L."/>
            <person name="Liu W."/>
            <person name="Nazareth L.V."/>
            <person name="Wang Q."/>
            <person name="Zhou J."/>
            <person name="Kaplan S.L."/>
            <person name="Weinstock G.M."/>
        </authorList>
    </citation>
    <scope>NUCLEOTIDE SEQUENCE [LARGE SCALE GENOMIC DNA]</scope>
    <source>
        <strain>USA300 / TCH1516</strain>
    </source>
</reference>
<organism>
    <name type="scientific">Staphylococcus aureus (strain USA300 / TCH1516)</name>
    <dbReference type="NCBI Taxonomy" id="451516"/>
    <lineage>
        <taxon>Bacteria</taxon>
        <taxon>Bacillati</taxon>
        <taxon>Bacillota</taxon>
        <taxon>Bacilli</taxon>
        <taxon>Bacillales</taxon>
        <taxon>Staphylococcaceae</taxon>
        <taxon>Staphylococcus</taxon>
    </lineage>
</organism>
<gene>
    <name evidence="1" type="primary">murG</name>
    <name type="ordered locus">USA300HOU_1355</name>
</gene>
<name>MURG_STAAT</name>